<dbReference type="EMBL" id="AY610478">
    <property type="status" value="NOT_ANNOTATED_CDS"/>
    <property type="molecule type" value="mRNA"/>
</dbReference>
<dbReference type="EMBL" id="AK344004">
    <property type="status" value="NOT_ANNOTATED_CDS"/>
    <property type="molecule type" value="mRNA"/>
</dbReference>
<dbReference type="EMBL" id="CU633939">
    <property type="status" value="NOT_ANNOTATED_CDS"/>
    <property type="molecule type" value="Genomic_DNA"/>
</dbReference>
<dbReference type="RefSeq" id="NP_001231738.1">
    <property type="nucleotide sequence ID" value="NM_001244809.1"/>
</dbReference>
<dbReference type="SMR" id="F1SRI0"/>
<dbReference type="FunCoup" id="F1SRI0">
    <property type="interactions" value="947"/>
</dbReference>
<dbReference type="STRING" id="9823.ENSSSCP00000028340"/>
<dbReference type="PaxDb" id="9823-ENSSSCP00000012907"/>
<dbReference type="PeptideAtlas" id="F1SRI0"/>
<dbReference type="Ensembl" id="ENSSSCT00055038261.1">
    <property type="protein sequence ID" value="ENSSSCP00055030396.1"/>
    <property type="gene ID" value="ENSSSCG00055019457.1"/>
</dbReference>
<dbReference type="Ensembl" id="ENSSSCT00070037883.1">
    <property type="protein sequence ID" value="ENSSSCP00070031684.1"/>
    <property type="gene ID" value="ENSSSCG00070019186.1"/>
</dbReference>
<dbReference type="Ensembl" id="ENSSSCT00090033184">
    <property type="protein sequence ID" value="ENSSSCP00090020614"/>
    <property type="gene ID" value="ENSSSCG00090018799"/>
</dbReference>
<dbReference type="GeneID" id="100513447"/>
<dbReference type="KEGG" id="ssc:100513447"/>
<dbReference type="CTD" id="6399"/>
<dbReference type="eggNOG" id="KOG3487">
    <property type="taxonomic scope" value="Eukaryota"/>
</dbReference>
<dbReference type="HOGENOM" id="CLU_085828_0_2_1"/>
<dbReference type="InParanoid" id="F1SRI0"/>
<dbReference type="OMA" id="RYMNQFI"/>
<dbReference type="OrthoDB" id="10252102at2759"/>
<dbReference type="Reactome" id="R-SSC-204005">
    <property type="pathway name" value="COPII-mediated vesicle transport"/>
</dbReference>
<dbReference type="Proteomes" id="UP000008227">
    <property type="component" value="Unplaced"/>
</dbReference>
<dbReference type="Proteomes" id="UP000314985">
    <property type="component" value="Unassembled WGS sequence"/>
</dbReference>
<dbReference type="Proteomes" id="UP000694570">
    <property type="component" value="Unplaced"/>
</dbReference>
<dbReference type="Proteomes" id="UP000694571">
    <property type="component" value="Unplaced"/>
</dbReference>
<dbReference type="Proteomes" id="UP000694720">
    <property type="component" value="Unplaced"/>
</dbReference>
<dbReference type="Proteomes" id="UP000694722">
    <property type="component" value="Unplaced"/>
</dbReference>
<dbReference type="Proteomes" id="UP000694723">
    <property type="component" value="Unplaced"/>
</dbReference>
<dbReference type="Proteomes" id="UP000694724">
    <property type="component" value="Unplaced"/>
</dbReference>
<dbReference type="Proteomes" id="UP000694725">
    <property type="component" value="Unplaced"/>
</dbReference>
<dbReference type="Proteomes" id="UP000694726">
    <property type="component" value="Unplaced"/>
</dbReference>
<dbReference type="Proteomes" id="UP000694727">
    <property type="component" value="Unplaced"/>
</dbReference>
<dbReference type="Proteomes" id="UP000694728">
    <property type="component" value="Unplaced"/>
</dbReference>
<dbReference type="GO" id="GO:0005737">
    <property type="term" value="C:cytoplasm"/>
    <property type="evidence" value="ECO:0000318"/>
    <property type="project" value="GO_Central"/>
</dbReference>
<dbReference type="GO" id="GO:0005793">
    <property type="term" value="C:endoplasmic reticulum-Golgi intermediate compartment"/>
    <property type="evidence" value="ECO:0007669"/>
    <property type="project" value="UniProtKB-SubCell"/>
</dbReference>
<dbReference type="GO" id="GO:0005634">
    <property type="term" value="C:nucleus"/>
    <property type="evidence" value="ECO:0000250"/>
    <property type="project" value="UniProtKB"/>
</dbReference>
<dbReference type="GO" id="GO:0048471">
    <property type="term" value="C:perinuclear region of cytoplasm"/>
    <property type="evidence" value="ECO:0007669"/>
    <property type="project" value="UniProtKB-SubCell"/>
</dbReference>
<dbReference type="GO" id="GO:0030008">
    <property type="term" value="C:TRAPP complex"/>
    <property type="evidence" value="ECO:0000318"/>
    <property type="project" value="GO_Central"/>
</dbReference>
<dbReference type="GO" id="GO:0006888">
    <property type="term" value="P:endoplasmic reticulum to Golgi vesicle-mediated transport"/>
    <property type="evidence" value="ECO:0000318"/>
    <property type="project" value="GO_Central"/>
</dbReference>
<dbReference type="CDD" id="cd14825">
    <property type="entry name" value="TRAPPC2_sedlin"/>
    <property type="match status" value="1"/>
</dbReference>
<dbReference type="FunFam" id="3.30.450.70:FF:000001">
    <property type="entry name" value="Trafficking protein particle complex subunit 2"/>
    <property type="match status" value="1"/>
</dbReference>
<dbReference type="Gene3D" id="3.30.450.70">
    <property type="match status" value="1"/>
</dbReference>
<dbReference type="InterPro" id="IPR011012">
    <property type="entry name" value="Longin-like_dom_sf"/>
</dbReference>
<dbReference type="InterPro" id="IPR006722">
    <property type="entry name" value="Sedlin"/>
</dbReference>
<dbReference type="PANTHER" id="PTHR12403">
    <property type="entry name" value="TRAFFICKING PROTEIN PARTICLE COMPLEX SUBUNIT 2"/>
    <property type="match status" value="1"/>
</dbReference>
<dbReference type="Pfam" id="PF04628">
    <property type="entry name" value="Sedlin_N"/>
    <property type="match status" value="1"/>
</dbReference>
<dbReference type="SUPFAM" id="SSF64356">
    <property type="entry name" value="SNARE-like"/>
    <property type="match status" value="1"/>
</dbReference>
<keyword id="KW-0963">Cytoplasm</keyword>
<keyword id="KW-0931">ER-Golgi transport</keyword>
<keyword id="KW-0539">Nucleus</keyword>
<keyword id="KW-1185">Reference proteome</keyword>
<keyword id="KW-0804">Transcription</keyword>
<keyword id="KW-0813">Transport</keyword>
<comment type="function">
    <text evidence="1">Prevents ENO1-mediated transcriptional repression and antagonizes ENO1-mediated cell death. May play a role in vesicular transport from endoplasmic reticulum to Golgi (By similarity).</text>
</comment>
<comment type="subunit">
    <text evidence="1">Part of the multisubunit TRAPP (transport protein particle) complex. Interacts with ENO1, PITX1, SF1, TRAPPC2L and TRAPPC3.</text>
</comment>
<comment type="subcellular location">
    <subcellularLocation>
        <location evidence="2">Cytoplasm</location>
        <location evidence="2">Perinuclear region</location>
    </subcellularLocation>
    <subcellularLocation>
        <location evidence="2">Nucleus</location>
    </subcellularLocation>
    <subcellularLocation>
        <location evidence="2">Endoplasmic reticulum-Golgi intermediate compartment</location>
    </subcellularLocation>
    <subcellularLocation>
        <location evidence="2">Cytoplasm</location>
    </subcellularLocation>
    <text evidence="2">Localized in perinuclear granular structures.</text>
</comment>
<comment type="similarity">
    <text evidence="3">Belongs to the TRAPP small subunits family. Sedlin subfamily.</text>
</comment>
<reference key="1">
    <citation type="journal article" date="2005" name="BMC Biol.">
        <title>Comparative analysis of protein coding sequences from human, mouse and the domesticated pig.</title>
        <authorList>
            <person name="Jorgensen F.G."/>
            <person name="Hobolth A."/>
            <person name="Hornshoj H."/>
            <person name="Bendixen C."/>
            <person name="Fredholm M."/>
            <person name="Schierup M.H."/>
        </authorList>
    </citation>
    <scope>NUCLEOTIDE SEQUENCE [MRNA]</scope>
</reference>
<reference key="2">
    <citation type="journal article" date="2004" name="Nucleic Acids Res.">
        <title>PEDE (Pig EST Data Explorer): construction of a database for ESTs derived from porcine full-length cDNA libraries.</title>
        <authorList>
            <person name="Uenishi H."/>
            <person name="Eguchi T."/>
            <person name="Suzuki K."/>
            <person name="Sawazaki T."/>
            <person name="Toki D."/>
            <person name="Shinkai H."/>
            <person name="Okumura N."/>
            <person name="Hamasima N."/>
            <person name="Awata T."/>
        </authorList>
    </citation>
    <scope>NUCLEOTIDE SEQUENCE [LARGE SCALE MRNA]</scope>
    <source>
        <tissue>Brain</tissue>
    </source>
</reference>
<reference key="3">
    <citation type="submission" date="2009-11" db="EMBL/GenBank/DDBJ databases">
        <authorList>
            <consortium name="Porcine genome sequencing project"/>
        </authorList>
    </citation>
    <scope>NUCLEOTIDE SEQUENCE [LARGE SCALE GENOMIC DNA]</scope>
</reference>
<evidence type="ECO:0000250" key="1"/>
<evidence type="ECO:0000250" key="2">
    <source>
        <dbReference type="UniProtKB" id="P0DI81"/>
    </source>
</evidence>
<evidence type="ECO:0000305" key="3"/>
<gene>
    <name type="primary">TRAPPC2</name>
</gene>
<name>TPPC2_PIG</name>
<proteinExistence type="evidence at transcript level"/>
<protein>
    <recommendedName>
        <fullName>Trafficking protein particle complex subunit 2</fullName>
    </recommendedName>
</protein>
<sequence>MSGSFYFVIVGHHDNPVFEMEFLPAGKAESKDDHRHLNQFIAHAALDLVDENMWLSNNMYLKTVDKFNEWFVSAFVTAGHMRFIMLHDVRQEDGIKNFFTDVYDLYIKFAMNPFYEPNSPIRSSAFDRKVQFLGKKHLLS</sequence>
<organism>
    <name type="scientific">Sus scrofa</name>
    <name type="common">Pig</name>
    <dbReference type="NCBI Taxonomy" id="9823"/>
    <lineage>
        <taxon>Eukaryota</taxon>
        <taxon>Metazoa</taxon>
        <taxon>Chordata</taxon>
        <taxon>Craniata</taxon>
        <taxon>Vertebrata</taxon>
        <taxon>Euteleostomi</taxon>
        <taxon>Mammalia</taxon>
        <taxon>Eutheria</taxon>
        <taxon>Laurasiatheria</taxon>
        <taxon>Artiodactyla</taxon>
        <taxon>Suina</taxon>
        <taxon>Suidae</taxon>
        <taxon>Sus</taxon>
    </lineage>
</organism>
<feature type="chain" id="PRO_0000412462" description="Trafficking protein particle complex subunit 2">
    <location>
        <begin position="1"/>
        <end position="140"/>
    </location>
</feature>
<accession>F1SRI0</accession>